<accession>O32264</accession>
<accession>O06982</accession>
<keyword id="KW-0311">Gluconate utilization</keyword>
<keyword id="KW-0521">NADP</keyword>
<keyword id="KW-0560">Oxidoreductase</keyword>
<keyword id="KW-1185">Reference proteome</keyword>
<feature type="chain" id="PRO_0000076032" description="Probable 2-ketogluconate reductase">
    <location>
        <begin position="1"/>
        <end position="325"/>
    </location>
</feature>
<feature type="active site" evidence="1">
    <location>
        <position position="240"/>
    </location>
</feature>
<feature type="active site" evidence="1">
    <location>
        <position position="269"/>
    </location>
</feature>
<feature type="active site" description="Proton donor" evidence="1">
    <location>
        <position position="288"/>
    </location>
</feature>
<feature type="binding site" evidence="1">
    <location>
        <begin position="158"/>
        <end position="159"/>
    </location>
    <ligand>
        <name>NAD(+)</name>
        <dbReference type="ChEBI" id="CHEBI:57540"/>
    </ligand>
</feature>
<feature type="binding site" evidence="1">
    <location>
        <position position="211"/>
    </location>
    <ligand>
        <name>NAD(+)</name>
        <dbReference type="ChEBI" id="CHEBI:57540"/>
    </ligand>
</feature>
<feature type="binding site" evidence="1">
    <location>
        <begin position="238"/>
        <end position="240"/>
    </location>
    <ligand>
        <name>NAD(+)</name>
        <dbReference type="ChEBI" id="CHEBI:57540"/>
    </ligand>
</feature>
<feature type="binding site" evidence="1">
    <location>
        <position position="264"/>
    </location>
    <ligand>
        <name>NAD(+)</name>
        <dbReference type="ChEBI" id="CHEBI:57540"/>
    </ligand>
</feature>
<feature type="binding site" evidence="1">
    <location>
        <begin position="288"/>
        <end position="291"/>
    </location>
    <ligand>
        <name>NAD(+)</name>
        <dbReference type="ChEBI" id="CHEBI:57540"/>
    </ligand>
</feature>
<comment type="catalytic activity">
    <reaction>
        <text>D-gluconate + NADP(+) = 2-dehydro-D-gluconate + NADPH + H(+)</text>
        <dbReference type="Rhea" id="RHEA:16653"/>
        <dbReference type="ChEBI" id="CHEBI:15378"/>
        <dbReference type="ChEBI" id="CHEBI:16808"/>
        <dbReference type="ChEBI" id="CHEBI:18391"/>
        <dbReference type="ChEBI" id="CHEBI:57783"/>
        <dbReference type="ChEBI" id="CHEBI:58349"/>
        <dbReference type="EC" id="1.1.1.215"/>
    </reaction>
</comment>
<comment type="similarity">
    <text evidence="2">Belongs to the D-isomer specific 2-hydroxyacid dehydrogenase family.</text>
</comment>
<comment type="sequence caution" evidence="2">
    <conflict type="erroneous initiation">
        <sequence resource="EMBL-CDS" id="CAB08066"/>
    </conflict>
</comment>
<name>TKRA_BACSU</name>
<evidence type="ECO:0000250" key="1"/>
<evidence type="ECO:0000305" key="2"/>
<organism>
    <name type="scientific">Bacillus subtilis (strain 168)</name>
    <dbReference type="NCBI Taxonomy" id="224308"/>
    <lineage>
        <taxon>Bacteria</taxon>
        <taxon>Bacillati</taxon>
        <taxon>Bacillota</taxon>
        <taxon>Bacilli</taxon>
        <taxon>Bacillales</taxon>
        <taxon>Bacillaceae</taxon>
        <taxon>Bacillus</taxon>
    </lineage>
</organism>
<dbReference type="EC" id="1.1.1.215"/>
<dbReference type="EMBL" id="Z94043">
    <property type="protein sequence ID" value="CAB08066.1"/>
    <property type="status" value="ALT_INIT"/>
    <property type="molecule type" value="Genomic_DNA"/>
</dbReference>
<dbReference type="EMBL" id="AL009126">
    <property type="protein sequence ID" value="CAB15473.1"/>
    <property type="molecule type" value="Genomic_DNA"/>
</dbReference>
<dbReference type="PIR" id="H70032">
    <property type="entry name" value="H70032"/>
</dbReference>
<dbReference type="RefSeq" id="NP_391348.1">
    <property type="nucleotide sequence ID" value="NC_000964.3"/>
</dbReference>
<dbReference type="RefSeq" id="WP_010886621.1">
    <property type="nucleotide sequence ID" value="NZ_OZ025638.1"/>
</dbReference>
<dbReference type="SMR" id="O32264"/>
<dbReference type="FunCoup" id="O32264">
    <property type="interactions" value="399"/>
</dbReference>
<dbReference type="STRING" id="224308.BSU34680"/>
<dbReference type="jPOST" id="O32264"/>
<dbReference type="PaxDb" id="224308-BSU34680"/>
<dbReference type="EnsemblBacteria" id="CAB15473">
    <property type="protein sequence ID" value="CAB15473"/>
    <property type="gene ID" value="BSU_34680"/>
</dbReference>
<dbReference type="GeneID" id="936519"/>
<dbReference type="KEGG" id="bsu:BSU34680"/>
<dbReference type="PATRIC" id="fig|224308.43.peg.3632"/>
<dbReference type="eggNOG" id="COG1052">
    <property type="taxonomic scope" value="Bacteria"/>
</dbReference>
<dbReference type="InParanoid" id="O32264"/>
<dbReference type="OrthoDB" id="9805416at2"/>
<dbReference type="PhylomeDB" id="O32264"/>
<dbReference type="BioCyc" id="BSUB:BSU34680-MONOMER"/>
<dbReference type="Proteomes" id="UP000001570">
    <property type="component" value="Chromosome"/>
</dbReference>
<dbReference type="GO" id="GO:0005829">
    <property type="term" value="C:cytosol"/>
    <property type="evidence" value="ECO:0000318"/>
    <property type="project" value="GO_Central"/>
</dbReference>
<dbReference type="GO" id="GO:0008873">
    <property type="term" value="F:gluconate 2-dehydrogenase activity"/>
    <property type="evidence" value="ECO:0007669"/>
    <property type="project" value="UniProtKB-EC"/>
</dbReference>
<dbReference type="GO" id="GO:0030267">
    <property type="term" value="F:glyoxylate reductase (NADPH) activity"/>
    <property type="evidence" value="ECO:0000318"/>
    <property type="project" value="GO_Central"/>
</dbReference>
<dbReference type="GO" id="GO:0016618">
    <property type="term" value="F:hydroxypyruvate reductase [NAD(P)H] activity"/>
    <property type="evidence" value="ECO:0000318"/>
    <property type="project" value="GO_Central"/>
</dbReference>
<dbReference type="GO" id="GO:0051287">
    <property type="term" value="F:NAD binding"/>
    <property type="evidence" value="ECO:0007669"/>
    <property type="project" value="InterPro"/>
</dbReference>
<dbReference type="GO" id="GO:0019521">
    <property type="term" value="P:D-gluconate metabolic process"/>
    <property type="evidence" value="ECO:0007669"/>
    <property type="project" value="UniProtKB-KW"/>
</dbReference>
<dbReference type="CDD" id="cd05301">
    <property type="entry name" value="GDH"/>
    <property type="match status" value="1"/>
</dbReference>
<dbReference type="FunFam" id="3.40.50.720:FF:000462">
    <property type="entry name" value="Glyoxylate reductase (NADP+)"/>
    <property type="match status" value="1"/>
</dbReference>
<dbReference type="Gene3D" id="3.40.50.720">
    <property type="entry name" value="NAD(P)-binding Rossmann-like Domain"/>
    <property type="match status" value="2"/>
</dbReference>
<dbReference type="InterPro" id="IPR050223">
    <property type="entry name" value="D-isomer_2-hydroxyacid_DH"/>
</dbReference>
<dbReference type="InterPro" id="IPR006139">
    <property type="entry name" value="D-isomer_2_OHA_DH_cat_dom"/>
</dbReference>
<dbReference type="InterPro" id="IPR029753">
    <property type="entry name" value="D-isomer_DH_CS"/>
</dbReference>
<dbReference type="InterPro" id="IPR029752">
    <property type="entry name" value="D-isomer_DH_CS1"/>
</dbReference>
<dbReference type="InterPro" id="IPR006140">
    <property type="entry name" value="D-isomer_DH_NAD-bd"/>
</dbReference>
<dbReference type="InterPro" id="IPR036291">
    <property type="entry name" value="NAD(P)-bd_dom_sf"/>
</dbReference>
<dbReference type="PANTHER" id="PTHR10996">
    <property type="entry name" value="2-HYDROXYACID DEHYDROGENASE-RELATED"/>
    <property type="match status" value="1"/>
</dbReference>
<dbReference type="PANTHER" id="PTHR10996:SF283">
    <property type="entry name" value="GLYOXYLATE_HYDROXYPYRUVATE REDUCTASE B"/>
    <property type="match status" value="1"/>
</dbReference>
<dbReference type="Pfam" id="PF00389">
    <property type="entry name" value="2-Hacid_dh"/>
    <property type="match status" value="1"/>
</dbReference>
<dbReference type="Pfam" id="PF02826">
    <property type="entry name" value="2-Hacid_dh_C"/>
    <property type="match status" value="1"/>
</dbReference>
<dbReference type="SUPFAM" id="SSF52283">
    <property type="entry name" value="Formate/glycerate dehydrogenase catalytic domain-like"/>
    <property type="match status" value="1"/>
</dbReference>
<dbReference type="SUPFAM" id="SSF51735">
    <property type="entry name" value="NAD(P)-binding Rossmann-fold domains"/>
    <property type="match status" value="1"/>
</dbReference>
<dbReference type="PROSITE" id="PS00065">
    <property type="entry name" value="D_2_HYDROXYACID_DH_1"/>
    <property type="match status" value="1"/>
</dbReference>
<dbReference type="PROSITE" id="PS00670">
    <property type="entry name" value="D_2_HYDROXYACID_DH_2"/>
    <property type="match status" value="1"/>
</dbReference>
<sequence length="325" mass="36619">MLKPFVFITKPIPEEIEAFIGEHCRYEVWQEDTLPSDVLFEKLKEAEGLLTSGTSGPSINRELLEHAPKLKVVSNQSVGYDNFDIEAMKERGVVGTHTPYTLDDTVADLAFSLILSSARRVAELDRFVRAGKWGTVEEEALFGIDVHHQTLGIIGMGRIGEQAARRAKFGFDMEVLYHNRHRKQETEDSIGVKYAELDTLLEQSDFILLITPLTDETYHMIGEREFKLMKNSAIFVNISRGKTVDEKALIRALQEGWIRGAGLDVYEKEPVTQDNPLLQLDNVTLLPHIGSATAKVRFNMCKQAAENMLAAIQGQTPKNLTREFQ</sequence>
<protein>
    <recommendedName>
        <fullName>Probable 2-ketogluconate reductase</fullName>
        <shortName>2KR</shortName>
        <ecNumber>1.1.1.215</ecNumber>
    </recommendedName>
</protein>
<proteinExistence type="inferred from homology"/>
<reference key="1">
    <citation type="submission" date="1997-04" db="EMBL/GenBank/DDBJ databases">
        <authorList>
            <person name="Denizot F."/>
        </authorList>
    </citation>
    <scope>NUCLEOTIDE SEQUENCE [GENOMIC DNA]</scope>
    <source>
        <strain>168</strain>
    </source>
</reference>
<reference key="2">
    <citation type="journal article" date="1997" name="Nature">
        <title>The complete genome sequence of the Gram-positive bacterium Bacillus subtilis.</title>
        <authorList>
            <person name="Kunst F."/>
            <person name="Ogasawara N."/>
            <person name="Moszer I."/>
            <person name="Albertini A.M."/>
            <person name="Alloni G."/>
            <person name="Azevedo V."/>
            <person name="Bertero M.G."/>
            <person name="Bessieres P."/>
            <person name="Bolotin A."/>
            <person name="Borchert S."/>
            <person name="Borriss R."/>
            <person name="Boursier L."/>
            <person name="Brans A."/>
            <person name="Braun M."/>
            <person name="Brignell S.C."/>
            <person name="Bron S."/>
            <person name="Brouillet S."/>
            <person name="Bruschi C.V."/>
            <person name="Caldwell B."/>
            <person name="Capuano V."/>
            <person name="Carter N.M."/>
            <person name="Choi S.-K."/>
            <person name="Codani J.-J."/>
            <person name="Connerton I.F."/>
            <person name="Cummings N.J."/>
            <person name="Daniel R.A."/>
            <person name="Denizot F."/>
            <person name="Devine K.M."/>
            <person name="Duesterhoeft A."/>
            <person name="Ehrlich S.D."/>
            <person name="Emmerson P.T."/>
            <person name="Entian K.-D."/>
            <person name="Errington J."/>
            <person name="Fabret C."/>
            <person name="Ferrari E."/>
            <person name="Foulger D."/>
            <person name="Fritz C."/>
            <person name="Fujita M."/>
            <person name="Fujita Y."/>
            <person name="Fuma S."/>
            <person name="Galizzi A."/>
            <person name="Galleron N."/>
            <person name="Ghim S.-Y."/>
            <person name="Glaser P."/>
            <person name="Goffeau A."/>
            <person name="Golightly E.J."/>
            <person name="Grandi G."/>
            <person name="Guiseppi G."/>
            <person name="Guy B.J."/>
            <person name="Haga K."/>
            <person name="Haiech J."/>
            <person name="Harwood C.R."/>
            <person name="Henaut A."/>
            <person name="Hilbert H."/>
            <person name="Holsappel S."/>
            <person name="Hosono S."/>
            <person name="Hullo M.-F."/>
            <person name="Itaya M."/>
            <person name="Jones L.-M."/>
            <person name="Joris B."/>
            <person name="Karamata D."/>
            <person name="Kasahara Y."/>
            <person name="Klaerr-Blanchard M."/>
            <person name="Klein C."/>
            <person name="Kobayashi Y."/>
            <person name="Koetter P."/>
            <person name="Koningstein G."/>
            <person name="Krogh S."/>
            <person name="Kumano M."/>
            <person name="Kurita K."/>
            <person name="Lapidus A."/>
            <person name="Lardinois S."/>
            <person name="Lauber J."/>
            <person name="Lazarevic V."/>
            <person name="Lee S.-M."/>
            <person name="Levine A."/>
            <person name="Liu H."/>
            <person name="Masuda S."/>
            <person name="Mauel C."/>
            <person name="Medigue C."/>
            <person name="Medina N."/>
            <person name="Mellado R.P."/>
            <person name="Mizuno M."/>
            <person name="Moestl D."/>
            <person name="Nakai S."/>
            <person name="Noback M."/>
            <person name="Noone D."/>
            <person name="O'Reilly M."/>
            <person name="Ogawa K."/>
            <person name="Ogiwara A."/>
            <person name="Oudega B."/>
            <person name="Park S.-H."/>
            <person name="Parro V."/>
            <person name="Pohl T.M."/>
            <person name="Portetelle D."/>
            <person name="Porwollik S."/>
            <person name="Prescott A.M."/>
            <person name="Presecan E."/>
            <person name="Pujic P."/>
            <person name="Purnelle B."/>
            <person name="Rapoport G."/>
            <person name="Rey M."/>
            <person name="Reynolds S."/>
            <person name="Rieger M."/>
            <person name="Rivolta C."/>
            <person name="Rocha E."/>
            <person name="Roche B."/>
            <person name="Rose M."/>
            <person name="Sadaie Y."/>
            <person name="Sato T."/>
            <person name="Scanlan E."/>
            <person name="Schleich S."/>
            <person name="Schroeter R."/>
            <person name="Scoffone F."/>
            <person name="Sekiguchi J."/>
            <person name="Sekowska A."/>
            <person name="Seror S.J."/>
            <person name="Serror P."/>
            <person name="Shin B.-S."/>
            <person name="Soldo B."/>
            <person name="Sorokin A."/>
            <person name="Tacconi E."/>
            <person name="Takagi T."/>
            <person name="Takahashi H."/>
            <person name="Takemaru K."/>
            <person name="Takeuchi M."/>
            <person name="Tamakoshi A."/>
            <person name="Tanaka T."/>
            <person name="Terpstra P."/>
            <person name="Tognoni A."/>
            <person name="Tosato V."/>
            <person name="Uchiyama S."/>
            <person name="Vandenbol M."/>
            <person name="Vannier F."/>
            <person name="Vassarotti A."/>
            <person name="Viari A."/>
            <person name="Wambutt R."/>
            <person name="Wedler E."/>
            <person name="Wedler H."/>
            <person name="Weitzenegger T."/>
            <person name="Winters P."/>
            <person name="Wipat A."/>
            <person name="Yamamoto H."/>
            <person name="Yamane K."/>
            <person name="Yasumoto K."/>
            <person name="Yata K."/>
            <person name="Yoshida K."/>
            <person name="Yoshikawa H.-F."/>
            <person name="Zumstein E."/>
            <person name="Yoshikawa H."/>
            <person name="Danchin A."/>
        </authorList>
    </citation>
    <scope>NUCLEOTIDE SEQUENCE [LARGE SCALE GENOMIC DNA]</scope>
    <source>
        <strain>168</strain>
    </source>
</reference>
<gene>
    <name type="primary">yvcT</name>
    <name type="ordered locus">BSU34680</name>
</gene>